<proteinExistence type="evidence at transcript level"/>
<dbReference type="EMBL" id="AB026643">
    <property type="protein sequence ID" value="BAB09257.1"/>
    <property type="status" value="ALT_SEQ"/>
    <property type="molecule type" value="Genomic_DNA"/>
</dbReference>
<dbReference type="EMBL" id="CP002688">
    <property type="protein sequence ID" value="AED94039.1"/>
    <property type="molecule type" value="Genomic_DNA"/>
</dbReference>
<dbReference type="EMBL" id="BT011998">
    <property type="status" value="NOT_ANNOTATED_CDS"/>
    <property type="molecule type" value="mRNA"/>
</dbReference>
<dbReference type="RefSeq" id="NP_198449.1">
    <property type="nucleotide sequence ID" value="NM_122991.2"/>
</dbReference>
<dbReference type="FunCoup" id="Q9FGB8">
    <property type="interactions" value="168"/>
</dbReference>
<dbReference type="STRING" id="3702.Q9FGB8"/>
<dbReference type="PaxDb" id="3702-AT5G36000.1"/>
<dbReference type="DNASU" id="833593"/>
<dbReference type="EnsemblPlants" id="AT5G36000.1">
    <property type="protein sequence ID" value="AT5G36000.1"/>
    <property type="gene ID" value="AT5G36000"/>
</dbReference>
<dbReference type="GeneID" id="833593"/>
<dbReference type="Gramene" id="AT5G36000.1">
    <property type="protein sequence ID" value="AT5G36000.1"/>
    <property type="gene ID" value="AT5G36000"/>
</dbReference>
<dbReference type="KEGG" id="ath:AT5G36000"/>
<dbReference type="Araport" id="AT5G36000"/>
<dbReference type="TAIR" id="AT5G36000"/>
<dbReference type="eggNOG" id="ENOG502QV89">
    <property type="taxonomic scope" value="Eukaryota"/>
</dbReference>
<dbReference type="HOGENOM" id="CLU_051928_0_0_1"/>
<dbReference type="InParanoid" id="Q9FGB8"/>
<dbReference type="OMA" id="IGAFIFD"/>
<dbReference type="PhylomeDB" id="Q9FGB8"/>
<dbReference type="PRO" id="PR:Q9FGB8"/>
<dbReference type="Proteomes" id="UP000006548">
    <property type="component" value="Chromosome 5"/>
</dbReference>
<dbReference type="ExpressionAtlas" id="Q9FGB8">
    <property type="expression patterns" value="baseline and differential"/>
</dbReference>
<dbReference type="FunFam" id="1.20.1280.50:FF:000175">
    <property type="entry name" value="Probable F-box protein At5g36000"/>
    <property type="match status" value="1"/>
</dbReference>
<dbReference type="Gene3D" id="1.20.1280.50">
    <property type="match status" value="1"/>
</dbReference>
<dbReference type="InterPro" id="IPR036047">
    <property type="entry name" value="F-box-like_dom_sf"/>
</dbReference>
<dbReference type="PANTHER" id="PTHR47149">
    <property type="entry name" value="F-BOX PROTEIN RMF"/>
    <property type="match status" value="1"/>
</dbReference>
<dbReference type="PANTHER" id="PTHR47149:SF1">
    <property type="entry name" value="F-BOX PROTEIN RMF"/>
    <property type="match status" value="1"/>
</dbReference>
<dbReference type="SUPFAM" id="SSF81383">
    <property type="entry name" value="F-box domain"/>
    <property type="match status" value="1"/>
</dbReference>
<reference key="1">
    <citation type="submission" date="1999-04" db="EMBL/GenBank/DDBJ databases">
        <title>Structural analysis of Arabidopsis thaliana chromosome 5. XI.</title>
        <authorList>
            <person name="Kaneko T."/>
            <person name="Katoh T."/>
            <person name="Asamizu E."/>
            <person name="Sato S."/>
            <person name="Nakamura Y."/>
            <person name="Kotani H."/>
            <person name="Tabata S."/>
        </authorList>
    </citation>
    <scope>NUCLEOTIDE SEQUENCE [LARGE SCALE GENOMIC DNA]</scope>
    <source>
        <strain>cv. Columbia</strain>
    </source>
</reference>
<reference key="2">
    <citation type="journal article" date="2017" name="Plant J.">
        <title>Araport11: a complete reannotation of the Arabidopsis thaliana reference genome.</title>
        <authorList>
            <person name="Cheng C.Y."/>
            <person name="Krishnakumar V."/>
            <person name="Chan A.P."/>
            <person name="Thibaud-Nissen F."/>
            <person name="Schobel S."/>
            <person name="Town C.D."/>
        </authorList>
    </citation>
    <scope>GENOME REANNOTATION</scope>
    <source>
        <strain>cv. Columbia</strain>
    </source>
</reference>
<reference key="3">
    <citation type="submission" date="2004-03" db="EMBL/GenBank/DDBJ databases">
        <authorList>
            <person name="Wrobel R.L."/>
            <person name="Kimball T.L."/>
            <person name="Steffen E."/>
            <person name="Thao S."/>
            <person name="Aceti D.J."/>
            <person name="Blommel P.G."/>
            <person name="Newman C.S."/>
            <person name="Zhao Q."/>
            <person name="Fox B.G."/>
            <person name="Phillips G.N. Jr."/>
            <person name="Markley J.L."/>
        </authorList>
    </citation>
    <scope>NUCLEOTIDE SEQUENCE [LARGE SCALE MRNA] OF 2-355</scope>
</reference>
<gene>
    <name type="ordered locus">At5g36000</name>
    <name type="ORF">MEE13.12</name>
</gene>
<evidence type="ECO:0000256" key="1">
    <source>
        <dbReference type="SAM" id="MobiDB-lite"/>
    </source>
</evidence>
<evidence type="ECO:0000305" key="2"/>
<sequence>MNTRSGDAEGDIRGKMIAPVRDGNGGQKRKLVQSNDIQRDEDGGAKRRIIQSSDQKNGKILRGIHGCVSPRCSAPTYQSRFSWYEQDIWTYITRFLDGKSLVKLGATNKWFYKIAMEDTVWRFACLRDLQVPETFPVSSTWIKIYASAFDGSHSYLFHQKEKHIDWMRLGAFVLDSRTSFLTESLSGRLKVPTEGTIEQMLQSSGSCLINDIKSGIWIADLQLLRCPLCDLSTCDGTMQTLDVRHIELFLSEGYKDGSWDYNLIGSHKLEKDASAACGAIFDLKHLKKSSSSGILNLKSWTGEADDSQPKAVIAPHAVAVHTRLQQNEGILVKYHTMKAGTDGDIVSIRISQQLL</sequence>
<accession>Q9FGB8</accession>
<organism>
    <name type="scientific">Arabidopsis thaliana</name>
    <name type="common">Mouse-ear cress</name>
    <dbReference type="NCBI Taxonomy" id="3702"/>
    <lineage>
        <taxon>Eukaryota</taxon>
        <taxon>Viridiplantae</taxon>
        <taxon>Streptophyta</taxon>
        <taxon>Embryophyta</taxon>
        <taxon>Tracheophyta</taxon>
        <taxon>Spermatophyta</taxon>
        <taxon>Magnoliopsida</taxon>
        <taxon>eudicotyledons</taxon>
        <taxon>Gunneridae</taxon>
        <taxon>Pentapetalae</taxon>
        <taxon>rosids</taxon>
        <taxon>malvids</taxon>
        <taxon>Brassicales</taxon>
        <taxon>Brassicaceae</taxon>
        <taxon>Camelineae</taxon>
        <taxon>Arabidopsis</taxon>
    </lineage>
</organism>
<comment type="sequence caution" evidence="2">
    <conflict type="erroneous gene model prediction">
        <sequence resource="EMBL-CDS" id="BAB09257"/>
    </conflict>
</comment>
<name>FB332_ARATH</name>
<feature type="chain" id="PRO_0000396047" description="Probable F-box protein At5g36000">
    <location>
        <begin position="1"/>
        <end position="355"/>
    </location>
</feature>
<feature type="domain" description="F-box; degenerate">
    <location>
        <begin position="78"/>
        <end position="124"/>
    </location>
</feature>
<feature type="region of interest" description="Disordered" evidence="1">
    <location>
        <begin position="1"/>
        <end position="44"/>
    </location>
</feature>
<feature type="compositionally biased region" description="Basic and acidic residues" evidence="1">
    <location>
        <begin position="1"/>
        <end position="14"/>
    </location>
</feature>
<protein>
    <recommendedName>
        <fullName>Probable F-box protein At5g36000</fullName>
    </recommendedName>
</protein>
<keyword id="KW-1185">Reference proteome</keyword>